<feature type="chain" id="PRO_0000050476" description="Probable inorganic phosphate transporter 1-9">
    <location>
        <begin position="1"/>
        <end position="532"/>
    </location>
</feature>
<feature type="topological domain" description="Cytoplasmic" evidence="2">
    <location>
        <begin position="1"/>
        <end position="22"/>
    </location>
</feature>
<feature type="transmembrane region" description="Helical" evidence="2">
    <location>
        <begin position="23"/>
        <end position="43"/>
    </location>
</feature>
<feature type="topological domain" description="Extracellular" evidence="2">
    <location>
        <begin position="44"/>
        <end position="62"/>
    </location>
</feature>
<feature type="transmembrane region" description="Helical" evidence="2">
    <location>
        <begin position="63"/>
        <end position="83"/>
    </location>
</feature>
<feature type="topological domain" description="Cytoplasmic" evidence="2">
    <location>
        <begin position="84"/>
        <end position="91"/>
    </location>
</feature>
<feature type="transmembrane region" description="Helical" evidence="2">
    <location>
        <begin position="92"/>
        <end position="112"/>
    </location>
</feature>
<feature type="topological domain" description="Extracellular" evidence="2">
    <location>
        <begin position="113"/>
        <end position="124"/>
    </location>
</feature>
<feature type="transmembrane region" description="Helical" evidence="2">
    <location>
        <begin position="125"/>
        <end position="145"/>
    </location>
</feature>
<feature type="topological domain" description="Cytoplasmic" evidence="2">
    <location>
        <begin position="146"/>
        <end position="154"/>
    </location>
</feature>
<feature type="transmembrane region" description="Helical" evidence="2">
    <location>
        <begin position="155"/>
        <end position="175"/>
    </location>
</feature>
<feature type="topological domain" description="Extracellular" evidence="2">
    <location>
        <begin position="176"/>
        <end position="207"/>
    </location>
</feature>
<feature type="transmembrane region" description="Helical" evidence="2">
    <location>
        <begin position="208"/>
        <end position="228"/>
    </location>
</feature>
<feature type="topological domain" description="Cytoplasmic" evidence="2">
    <location>
        <begin position="229"/>
        <end position="292"/>
    </location>
</feature>
<feature type="transmembrane region" description="Helical" evidence="2">
    <location>
        <begin position="293"/>
        <end position="313"/>
    </location>
</feature>
<feature type="topological domain" description="Extracellular" evidence="2">
    <location>
        <begin position="314"/>
        <end position="343"/>
    </location>
</feature>
<feature type="transmembrane region" description="Helical" evidence="2">
    <location>
        <begin position="344"/>
        <end position="364"/>
    </location>
</feature>
<feature type="topological domain" description="Cytoplasmic" evidence="2">
    <location>
        <begin position="365"/>
        <end position="371"/>
    </location>
</feature>
<feature type="transmembrane region" description="Helical" evidence="2">
    <location>
        <begin position="372"/>
        <end position="392"/>
    </location>
</feature>
<feature type="topological domain" description="Extracellular" evidence="2">
    <location>
        <begin position="393"/>
        <end position="406"/>
    </location>
</feature>
<feature type="transmembrane region" description="Helical" evidence="2">
    <location>
        <begin position="407"/>
        <end position="427"/>
    </location>
</feature>
<feature type="topological domain" description="Cytoplasmic" evidence="2">
    <location>
        <begin position="428"/>
        <end position="441"/>
    </location>
</feature>
<feature type="transmembrane region" description="Helical" evidence="2">
    <location>
        <begin position="442"/>
        <end position="462"/>
    </location>
</feature>
<feature type="topological domain" description="Extracellular" evidence="2">
    <location>
        <begin position="463"/>
        <end position="478"/>
    </location>
</feature>
<feature type="transmembrane region" description="Helical" evidence="2">
    <location>
        <begin position="479"/>
        <end position="499"/>
    </location>
</feature>
<feature type="topological domain" description="Cytoplasmic" evidence="2">
    <location>
        <begin position="500"/>
        <end position="532"/>
    </location>
</feature>
<feature type="region of interest" description="Disordered" evidence="3">
    <location>
        <begin position="509"/>
        <end position="532"/>
    </location>
</feature>
<feature type="compositionally biased region" description="Polar residues" evidence="3">
    <location>
        <begin position="515"/>
        <end position="524"/>
    </location>
</feature>
<reference key="1">
    <citation type="journal article" date="2000" name="Nature">
        <title>Sequence and analysis of chromosome 1 of the plant Arabidopsis thaliana.</title>
        <authorList>
            <person name="Theologis A."/>
            <person name="Ecker J.R."/>
            <person name="Palm C.J."/>
            <person name="Federspiel N.A."/>
            <person name="Kaul S."/>
            <person name="White O."/>
            <person name="Alonso J."/>
            <person name="Altafi H."/>
            <person name="Araujo R."/>
            <person name="Bowman C.L."/>
            <person name="Brooks S.Y."/>
            <person name="Buehler E."/>
            <person name="Chan A."/>
            <person name="Chao Q."/>
            <person name="Chen H."/>
            <person name="Cheuk R.F."/>
            <person name="Chin C.W."/>
            <person name="Chung M.K."/>
            <person name="Conn L."/>
            <person name="Conway A.B."/>
            <person name="Conway A.R."/>
            <person name="Creasy T.H."/>
            <person name="Dewar K."/>
            <person name="Dunn P."/>
            <person name="Etgu P."/>
            <person name="Feldblyum T.V."/>
            <person name="Feng J.-D."/>
            <person name="Fong B."/>
            <person name="Fujii C.Y."/>
            <person name="Gill J.E."/>
            <person name="Goldsmith A.D."/>
            <person name="Haas B."/>
            <person name="Hansen N.F."/>
            <person name="Hughes B."/>
            <person name="Huizar L."/>
            <person name="Hunter J.L."/>
            <person name="Jenkins J."/>
            <person name="Johnson-Hopson C."/>
            <person name="Khan S."/>
            <person name="Khaykin E."/>
            <person name="Kim C.J."/>
            <person name="Koo H.L."/>
            <person name="Kremenetskaia I."/>
            <person name="Kurtz D.B."/>
            <person name="Kwan A."/>
            <person name="Lam B."/>
            <person name="Langin-Hooper S."/>
            <person name="Lee A."/>
            <person name="Lee J.M."/>
            <person name="Lenz C.A."/>
            <person name="Li J.H."/>
            <person name="Li Y.-P."/>
            <person name="Lin X."/>
            <person name="Liu S.X."/>
            <person name="Liu Z.A."/>
            <person name="Luros J.S."/>
            <person name="Maiti R."/>
            <person name="Marziali A."/>
            <person name="Militscher J."/>
            <person name="Miranda M."/>
            <person name="Nguyen M."/>
            <person name="Nierman W.C."/>
            <person name="Osborne B.I."/>
            <person name="Pai G."/>
            <person name="Peterson J."/>
            <person name="Pham P.K."/>
            <person name="Rizzo M."/>
            <person name="Rooney T."/>
            <person name="Rowley D."/>
            <person name="Sakano H."/>
            <person name="Salzberg S.L."/>
            <person name="Schwartz J.R."/>
            <person name="Shinn P."/>
            <person name="Southwick A.M."/>
            <person name="Sun H."/>
            <person name="Tallon L.J."/>
            <person name="Tambunga G."/>
            <person name="Toriumi M.J."/>
            <person name="Town C.D."/>
            <person name="Utterback T."/>
            <person name="Van Aken S."/>
            <person name="Vaysberg M."/>
            <person name="Vysotskaia V.S."/>
            <person name="Walker M."/>
            <person name="Wu D."/>
            <person name="Yu G."/>
            <person name="Fraser C.M."/>
            <person name="Venter J.C."/>
            <person name="Davis R.W."/>
        </authorList>
    </citation>
    <scope>NUCLEOTIDE SEQUENCE [LARGE SCALE GENOMIC DNA]</scope>
    <source>
        <strain>cv. Columbia</strain>
    </source>
</reference>
<reference key="2">
    <citation type="journal article" date="2017" name="Plant J.">
        <title>Araport11: a complete reannotation of the Arabidopsis thaliana reference genome.</title>
        <authorList>
            <person name="Cheng C.Y."/>
            <person name="Krishnakumar V."/>
            <person name="Chan A.P."/>
            <person name="Thibaud-Nissen F."/>
            <person name="Schobel S."/>
            <person name="Town C.D."/>
        </authorList>
    </citation>
    <scope>GENOME REANNOTATION</scope>
    <source>
        <strain>cv. Columbia</strain>
    </source>
</reference>
<reference key="3">
    <citation type="journal article" date="2003" name="Science">
        <title>Empirical analysis of transcriptional activity in the Arabidopsis genome.</title>
        <authorList>
            <person name="Yamada K."/>
            <person name="Lim J."/>
            <person name="Dale J.M."/>
            <person name="Chen H."/>
            <person name="Shinn P."/>
            <person name="Palm C.J."/>
            <person name="Southwick A.M."/>
            <person name="Wu H.C."/>
            <person name="Kim C.J."/>
            <person name="Nguyen M."/>
            <person name="Pham P.K."/>
            <person name="Cheuk R.F."/>
            <person name="Karlin-Newmann G."/>
            <person name="Liu S.X."/>
            <person name="Lam B."/>
            <person name="Sakano H."/>
            <person name="Wu T."/>
            <person name="Yu G."/>
            <person name="Miranda M."/>
            <person name="Quach H.L."/>
            <person name="Tripp M."/>
            <person name="Chang C.H."/>
            <person name="Lee J.M."/>
            <person name="Toriumi M.J."/>
            <person name="Chan M.M."/>
            <person name="Tang C.C."/>
            <person name="Onodera C.S."/>
            <person name="Deng J.M."/>
            <person name="Akiyama K."/>
            <person name="Ansari Y."/>
            <person name="Arakawa T."/>
            <person name="Banh J."/>
            <person name="Banno F."/>
            <person name="Bowser L."/>
            <person name="Brooks S.Y."/>
            <person name="Carninci P."/>
            <person name="Chao Q."/>
            <person name="Choy N."/>
            <person name="Enju A."/>
            <person name="Goldsmith A.D."/>
            <person name="Gurjal M."/>
            <person name="Hansen N.F."/>
            <person name="Hayashizaki Y."/>
            <person name="Johnson-Hopson C."/>
            <person name="Hsuan V.W."/>
            <person name="Iida K."/>
            <person name="Karnes M."/>
            <person name="Khan S."/>
            <person name="Koesema E."/>
            <person name="Ishida J."/>
            <person name="Jiang P.X."/>
            <person name="Jones T."/>
            <person name="Kawai J."/>
            <person name="Kamiya A."/>
            <person name="Meyers C."/>
            <person name="Nakajima M."/>
            <person name="Narusaka M."/>
            <person name="Seki M."/>
            <person name="Sakurai T."/>
            <person name="Satou M."/>
            <person name="Tamse R."/>
            <person name="Vaysberg M."/>
            <person name="Wallender E.K."/>
            <person name="Wong C."/>
            <person name="Yamamura Y."/>
            <person name="Yuan S."/>
            <person name="Shinozaki K."/>
            <person name="Davis R.W."/>
            <person name="Theologis A."/>
            <person name="Ecker J.R."/>
        </authorList>
    </citation>
    <scope>NUCLEOTIDE SEQUENCE [LARGE SCALE MRNA]</scope>
    <source>
        <strain>cv. Columbia</strain>
    </source>
</reference>
<reference key="4">
    <citation type="journal article" date="2002" name="Plant J.">
        <title>Expression analysis suggests novel roles for members of the Pht1 family of phosphate transporters in Arabidopsis.</title>
        <authorList>
            <person name="Mudge S.R."/>
            <person name="Rae A.L."/>
            <person name="Diatloff E."/>
            <person name="Smith F.W."/>
        </authorList>
    </citation>
    <scope>INDUCTION</scope>
    <scope>GENE FAMILY</scope>
    <scope>NOMENCLATURE</scope>
</reference>
<reference key="5">
    <citation type="journal article" date="2004" name="Plant Mol. Biol.">
        <title>Transcriptional regulation and functional properties of Arabidopsis Pht1;4, a high affinity transporter contributing greatly to phosphate uptake in phosphate deprived plants.</title>
        <authorList>
            <person name="Misson J."/>
            <person name="Thibaud M.-C."/>
            <person name="Bechtold N."/>
            <person name="Raghothama K."/>
            <person name="Nussaume L."/>
        </authorList>
    </citation>
    <scope>INDUCTION</scope>
</reference>
<keyword id="KW-0472">Membrane</keyword>
<keyword id="KW-0592">Phosphate transport</keyword>
<keyword id="KW-1185">Reference proteome</keyword>
<keyword id="KW-0769">Symport</keyword>
<keyword id="KW-0812">Transmembrane</keyword>
<keyword id="KW-1133">Transmembrane helix</keyword>
<keyword id="KW-0813">Transport</keyword>
<sequence length="532" mass="58701">MPELSLLSALDAARIQWYHFKAIIVAGMGLFTDAYDLFCIAPIMKMISQIYYHKDSIGTALLSTSYAIALLGTALGQLIFGYLGDRVGRRKVYGLSLLIMVFSSFGCGFSVCTTRRSCVMVSLGFFRFVLGLGIGGDYPLSATIMSEFANKRTRGAFIAAVFSMQGLGILMSSAVTMVVCLAFKNAGEGSSEKTNVAGLETLAPPESDIAWRLILMIGALPAALTFYWRMLMPETARYTALVENNVVQAAKDMQRVMSVSMISQITEDSSSELEQPPSSSSYKLFSRRFLSLHGRDLFAASANWFLVDVVFYTSNLLLSQIFNFSNKPLNSTNVYDSAFEVAKLAAIVAACSTIPGYWFTVYFIDKIGRVKIQMMGFFLMAVVYLVAGIPYSWYWSKHEKTNKGFMVLYGLIFFFSNFGPNTTTFIIPAELFPARFRSTCHGISGAAGKFGAIVGTVGFLWATRHHEEDGFPDVKRVRIAFLILGGVCIAGMIVTYLFTRETMGRSLEENEDEIVSTSAGSSPANELLRRQY</sequence>
<evidence type="ECO:0000250" key="1"/>
<evidence type="ECO:0000255" key="2"/>
<evidence type="ECO:0000256" key="3">
    <source>
        <dbReference type="SAM" id="MobiDB-lite"/>
    </source>
</evidence>
<evidence type="ECO:0000269" key="4">
    <source>
    </source>
</evidence>
<evidence type="ECO:0000269" key="5">
    <source>
    </source>
</evidence>
<evidence type="ECO:0000305" key="6"/>
<gene>
    <name type="primary">PHT1-9</name>
    <name type="ordered locus">At1g76430</name>
    <name type="ORF">F14G6.3</name>
    <name type="ORF">F15M4.7</name>
</gene>
<organism>
    <name type="scientific">Arabidopsis thaliana</name>
    <name type="common">Mouse-ear cress</name>
    <dbReference type="NCBI Taxonomy" id="3702"/>
    <lineage>
        <taxon>Eukaryota</taxon>
        <taxon>Viridiplantae</taxon>
        <taxon>Streptophyta</taxon>
        <taxon>Embryophyta</taxon>
        <taxon>Tracheophyta</taxon>
        <taxon>Spermatophyta</taxon>
        <taxon>Magnoliopsida</taxon>
        <taxon>eudicotyledons</taxon>
        <taxon>Gunneridae</taxon>
        <taxon>Pentapetalae</taxon>
        <taxon>rosids</taxon>
        <taxon>malvids</taxon>
        <taxon>Brassicales</taxon>
        <taxon>Brassicaceae</taxon>
        <taxon>Camelineae</taxon>
        <taxon>Arabidopsis</taxon>
    </lineage>
</organism>
<name>PHT19_ARATH</name>
<proteinExistence type="evidence at transcript level"/>
<dbReference type="EMBL" id="AC012394">
    <property type="protein sequence ID" value="AAF16658.1"/>
    <property type="molecule type" value="Genomic_DNA"/>
</dbReference>
<dbReference type="EMBL" id="AC015450">
    <property type="protein sequence ID" value="AAG51941.1"/>
    <property type="molecule type" value="Genomic_DNA"/>
</dbReference>
<dbReference type="EMBL" id="CP002684">
    <property type="protein sequence ID" value="AEE35840.1"/>
    <property type="molecule type" value="Genomic_DNA"/>
</dbReference>
<dbReference type="EMBL" id="BT008324">
    <property type="protein sequence ID" value="AAP37683.1"/>
    <property type="molecule type" value="mRNA"/>
</dbReference>
<dbReference type="PIR" id="A96792">
    <property type="entry name" value="A96792"/>
</dbReference>
<dbReference type="RefSeq" id="NP_177769.1">
    <property type="nucleotide sequence ID" value="NM_106293.4"/>
</dbReference>
<dbReference type="SMR" id="Q9S735"/>
<dbReference type="BioGRID" id="29195">
    <property type="interactions" value="2"/>
</dbReference>
<dbReference type="FunCoup" id="Q9S735">
    <property type="interactions" value="379"/>
</dbReference>
<dbReference type="IntAct" id="Q9S735">
    <property type="interactions" value="2"/>
</dbReference>
<dbReference type="STRING" id="3702.Q9S735"/>
<dbReference type="PaxDb" id="3702-AT1G76430.1"/>
<dbReference type="ProteomicsDB" id="236158"/>
<dbReference type="EnsemblPlants" id="AT1G76430.1">
    <property type="protein sequence ID" value="AT1G76430.1"/>
    <property type="gene ID" value="AT1G76430"/>
</dbReference>
<dbReference type="GeneID" id="843976"/>
<dbReference type="Gramene" id="AT1G76430.1">
    <property type="protein sequence ID" value="AT1G76430.1"/>
    <property type="gene ID" value="AT1G76430"/>
</dbReference>
<dbReference type="KEGG" id="ath:AT1G76430"/>
<dbReference type="Araport" id="AT1G76430"/>
<dbReference type="TAIR" id="AT1G76430">
    <property type="gene designation" value="PHT1"/>
</dbReference>
<dbReference type="eggNOG" id="KOG0252">
    <property type="taxonomic scope" value="Eukaryota"/>
</dbReference>
<dbReference type="HOGENOM" id="CLU_001265_46_14_1"/>
<dbReference type="InParanoid" id="Q9S735"/>
<dbReference type="OMA" id="TKWLIPE"/>
<dbReference type="PhylomeDB" id="Q9S735"/>
<dbReference type="PRO" id="PR:Q9S735"/>
<dbReference type="Proteomes" id="UP000006548">
    <property type="component" value="Chromosome 1"/>
</dbReference>
<dbReference type="ExpressionAtlas" id="Q9S735">
    <property type="expression patterns" value="baseline and differential"/>
</dbReference>
<dbReference type="GO" id="GO:0005886">
    <property type="term" value="C:plasma membrane"/>
    <property type="evidence" value="ECO:0000314"/>
    <property type="project" value="TAIR"/>
</dbReference>
<dbReference type="GO" id="GO:0015415">
    <property type="term" value="F:ATPase-coupled phosphate ion transmembrane transporter activity"/>
    <property type="evidence" value="ECO:0000314"/>
    <property type="project" value="TAIR"/>
</dbReference>
<dbReference type="GO" id="GO:0015293">
    <property type="term" value="F:symporter activity"/>
    <property type="evidence" value="ECO:0007669"/>
    <property type="project" value="UniProtKB-KW"/>
</dbReference>
<dbReference type="GO" id="GO:1901684">
    <property type="term" value="P:arsenate ion transmembrane transport"/>
    <property type="evidence" value="ECO:0000315"/>
    <property type="project" value="TAIR"/>
</dbReference>
<dbReference type="GO" id="GO:0006817">
    <property type="term" value="P:phosphate ion transport"/>
    <property type="evidence" value="ECO:0000315"/>
    <property type="project" value="TAIR"/>
</dbReference>
<dbReference type="CDD" id="cd17364">
    <property type="entry name" value="MFS_PhT"/>
    <property type="match status" value="1"/>
</dbReference>
<dbReference type="FunFam" id="1.20.1250.20:FF:000175">
    <property type="entry name" value="Inorganic phosphate transporter 1-6"/>
    <property type="match status" value="1"/>
</dbReference>
<dbReference type="Gene3D" id="1.20.1250.20">
    <property type="entry name" value="MFS general substrate transporter like domains"/>
    <property type="match status" value="1"/>
</dbReference>
<dbReference type="InterPro" id="IPR020846">
    <property type="entry name" value="MFS_dom"/>
</dbReference>
<dbReference type="InterPro" id="IPR005828">
    <property type="entry name" value="MFS_sugar_transport-like"/>
</dbReference>
<dbReference type="InterPro" id="IPR036259">
    <property type="entry name" value="MFS_trans_sf"/>
</dbReference>
<dbReference type="InterPro" id="IPR005829">
    <property type="entry name" value="Sugar_transporter_CS"/>
</dbReference>
<dbReference type="PANTHER" id="PTHR24064">
    <property type="entry name" value="SOLUTE CARRIER FAMILY 22 MEMBER"/>
    <property type="match status" value="1"/>
</dbReference>
<dbReference type="Pfam" id="PF00083">
    <property type="entry name" value="Sugar_tr"/>
    <property type="match status" value="1"/>
</dbReference>
<dbReference type="SUPFAM" id="SSF103473">
    <property type="entry name" value="MFS general substrate transporter"/>
    <property type="match status" value="1"/>
</dbReference>
<dbReference type="PROSITE" id="PS50850">
    <property type="entry name" value="MFS"/>
    <property type="match status" value="1"/>
</dbReference>
<dbReference type="PROSITE" id="PS00217">
    <property type="entry name" value="SUGAR_TRANSPORT_2"/>
    <property type="match status" value="1"/>
</dbReference>
<protein>
    <recommendedName>
        <fullName>Probable inorganic phosphate transporter 1-9</fullName>
        <shortName>AtPht1;9</shortName>
    </recommendedName>
    <alternativeName>
        <fullName>H(+)/Pi cotransporter</fullName>
    </alternativeName>
</protein>
<comment type="function">
    <text evidence="1">High-affinity transporter for external inorganic phosphate.</text>
</comment>
<comment type="subcellular location">
    <subcellularLocation>
        <location evidence="1">Membrane</location>
        <topology evidence="1">Multi-pass membrane protein</topology>
    </subcellularLocation>
</comment>
<comment type="induction">
    <text evidence="4 5">Slightly induced in roots during phosphate starvation.</text>
</comment>
<comment type="miscellaneous">
    <text>Although related to the sugar transporter family, it does not transport sugars.</text>
</comment>
<comment type="similarity">
    <text evidence="6">Belongs to the major facilitator superfamily. Phosphate:H(+) symporter (TC 2.A.1.9) family.</text>
</comment>
<accession>Q9S735</accession>